<gene>
    <name evidence="6" type="ORF">SAMN04489726_2557</name>
</gene>
<keyword id="KW-0456">Lyase</keyword>
<keyword id="KW-0460">Magnesium</keyword>
<keyword id="KW-0479">Metal-binding</keyword>
<keyword id="KW-1185">Reference proteome</keyword>
<feature type="chain" id="PRO_0000460714" description="Bonnadiene synthase">
    <location>
        <begin position="1"/>
        <end position="363"/>
    </location>
</feature>
<feature type="binding site" evidence="1">
    <location>
        <position position="93"/>
    </location>
    <ligand>
        <name>Mg(2+)</name>
        <dbReference type="ChEBI" id="CHEBI:18420"/>
        <label>1</label>
    </ligand>
</feature>
<feature type="binding site" evidence="1">
    <location>
        <position position="98"/>
    </location>
    <ligand>
        <name>Mg(2+)</name>
        <dbReference type="ChEBI" id="CHEBI:18420"/>
        <label>1</label>
    </ligand>
</feature>
<feature type="binding site" evidence="1">
    <location>
        <position position="98"/>
    </location>
    <ligand>
        <name>Mg(2+)</name>
        <dbReference type="ChEBI" id="CHEBI:18420"/>
        <label>2</label>
    </ligand>
</feature>
<feature type="binding site" evidence="1">
    <location>
        <position position="234"/>
    </location>
    <ligand>
        <name>Mg(2+)</name>
        <dbReference type="ChEBI" id="CHEBI:18420"/>
        <label>3</label>
    </ligand>
</feature>
<feature type="binding site" evidence="1">
    <location>
        <position position="238"/>
    </location>
    <ligand>
        <name>Mg(2+)</name>
        <dbReference type="ChEBI" id="CHEBI:18420"/>
        <label>3</label>
    </ligand>
</feature>
<feature type="binding site" evidence="1">
    <location>
        <position position="242"/>
    </location>
    <ligand>
        <name>Mg(2+)</name>
        <dbReference type="ChEBI" id="CHEBI:18420"/>
        <label>3</label>
    </ligand>
</feature>
<feature type="mutagenesis site" description="Loss of activity with both Mg(2+) and Mn(2+)." evidence="2">
    <original>P</original>
    <variation>A</variation>
    <location>
        <position position="66"/>
    </location>
</feature>
<feature type="mutagenesis site" description="Loss of activity with both Mg(2+) and Mn(2+)." evidence="2">
    <original>V</original>
    <variation>A</variation>
    <location>
        <position position="73"/>
    </location>
</feature>
<feature type="mutagenesis site" description="Loss of activity with both Mg(2+) and Mn(2+)." evidence="2">
    <original>R</original>
    <variation>K</variation>
    <variation>M</variation>
    <location>
        <position position="154"/>
    </location>
</feature>
<feature type="mutagenesis site" description="Shows only a slightly decreased activity with Mg(2+), but is almost inactive with Mn(2+)." evidence="2">
    <original>K</original>
    <variation>E</variation>
    <location>
        <position position="169"/>
    </location>
</feature>
<feature type="mutagenesis site" description="Retains 10% of activity with Mg(2+) but is inactive with Mn(2+)." evidence="2">
    <original>Y</original>
    <variation>F</variation>
    <location>
        <position position="184"/>
    </location>
</feature>
<feature type="mutagenesis site" description="Loss of activity with both Mg(2+) and Mn(2+)." evidence="2">
    <original>E</original>
    <variation>D</variation>
    <location>
        <position position="202"/>
    </location>
</feature>
<reference key="1">
    <citation type="submission" date="2016-10" db="EMBL/GenBank/DDBJ databases">
        <authorList>
            <person name="Varghese N."/>
        </authorList>
    </citation>
    <scope>NUCLEOTIDE SEQUENCE [LARGE SCALE GENOMIC DNA]</scope>
    <source>
        <strain>ATCC 55061 / DSM 44149 / JCM 9917 / KCTC 9837 / NRRL B-24461 / NBRC 101910 / NCIMB 13433 / R761-7</strain>
    </source>
</reference>
<reference key="2">
    <citation type="journal article" date="2018" name="Angew. Chem. Int. Ed.">
        <title>Two Bacterial Diterpene Synthases from Allokutzneria albata Produce Bonnadiene, Phomopsene, and Allokutznerene.</title>
        <authorList>
            <person name="Lauterbach L."/>
            <person name="Rinkel J."/>
            <person name="Dickschat J.S."/>
        </authorList>
    </citation>
    <scope>FUNCTION</scope>
    <scope>CATALYTIC ACTIVITY</scope>
    <scope>REACTION MECHANISM</scope>
    <scope>COFACTOR</scope>
    <scope>MUTAGENESIS OF PRO-66; VAL-73; ARG-154; LYS-169; TYR-184 AND GLU-202</scope>
    <source>
        <strain>ATCC 55061 / DSM 44149 / JCM 9917 / KCTC 9837 / NRRL B-24461 / NBRC 101910 / NCIMB 13433 / R761-7</strain>
    </source>
</reference>
<comment type="function">
    <text evidence="2">Diterpene synthase that catalyzes the conversion of geranylgeranyl diphosphate (GGPP) to bonnadiene (PubMed:29758116). Cannot use geranyl diphosphate (GPP), farnesyl diphosphate (FPP) and geranylfarnesyl diphosphate (GFPP) (PubMed:29758116).</text>
</comment>
<comment type="catalytic activity">
    <reaction evidence="2">
        <text>(2E,6E,10E)-geranylgeranyl diphosphate = bonnadiene + diphosphate</text>
        <dbReference type="Rhea" id="RHEA:78979"/>
        <dbReference type="ChEBI" id="CHEBI:33019"/>
        <dbReference type="ChEBI" id="CHEBI:58756"/>
        <dbReference type="ChEBI" id="CHEBI:219774"/>
        <dbReference type="EC" id="4.2.3.223"/>
    </reaction>
    <physiologicalReaction direction="left-to-right" evidence="2">
        <dbReference type="Rhea" id="RHEA:78980"/>
    </physiologicalReaction>
</comment>
<comment type="cofactor">
    <cofactor evidence="2">
        <name>Mg(2+)</name>
        <dbReference type="ChEBI" id="CHEBI:18420"/>
    </cofactor>
    <text evidence="1 2">Binds 3 Mg(2+) ions per subunit (By similarity). Mg(2+) can be substituted with Mn(2+), with a loss of approximately half of the activity (PubMed:29758116).</text>
</comment>
<comment type="pathway">
    <text evidence="5">Secondary metabolite biosynthesis; terpenoid biosynthesis.</text>
</comment>
<comment type="similarity">
    <text evidence="4">Belongs to the terpene synthase family.</text>
</comment>
<protein>
    <recommendedName>
        <fullName evidence="3">Bonnadiene synthase</fullName>
        <shortName evidence="3">BdS</shortName>
        <ecNumber evidence="2">4.2.3.223</ecNumber>
    </recommendedName>
    <alternativeName>
        <fullName evidence="3">Diterpene synthase</fullName>
    </alternativeName>
</protein>
<proteinExistence type="evidence at protein level"/>
<accession>A0A1G9UQQ0</accession>
<organism>
    <name type="scientific">Allokutzneria albata</name>
    <name type="common">Kibdelosporangium albatum</name>
    <dbReference type="NCBI Taxonomy" id="211114"/>
    <lineage>
        <taxon>Bacteria</taxon>
        <taxon>Bacillati</taxon>
        <taxon>Actinomycetota</taxon>
        <taxon>Actinomycetes</taxon>
        <taxon>Pseudonocardiales</taxon>
        <taxon>Pseudonocardiaceae</taxon>
        <taxon>Allokutzneria</taxon>
    </lineage>
</organism>
<dbReference type="EC" id="4.2.3.223" evidence="2"/>
<dbReference type="EMBL" id="LT629701">
    <property type="protein sequence ID" value="SDM62252.1"/>
    <property type="molecule type" value="Genomic_DNA"/>
</dbReference>
<dbReference type="RefSeq" id="WP_030432512.1">
    <property type="nucleotide sequence ID" value="NZ_JOEF01000028.1"/>
</dbReference>
<dbReference type="SMR" id="A0A1G9UQQ0"/>
<dbReference type="STRING" id="211114.SAMN04489726_2557"/>
<dbReference type="eggNOG" id="ENOG5033UZ3">
    <property type="taxonomic scope" value="Bacteria"/>
</dbReference>
<dbReference type="OrthoDB" id="2989600at2"/>
<dbReference type="UniPathway" id="UPA00213"/>
<dbReference type="Proteomes" id="UP000183376">
    <property type="component" value="Chromosome i"/>
</dbReference>
<dbReference type="GO" id="GO:0046872">
    <property type="term" value="F:metal ion binding"/>
    <property type="evidence" value="ECO:0007669"/>
    <property type="project" value="UniProtKB-KW"/>
</dbReference>
<dbReference type="GO" id="GO:0010333">
    <property type="term" value="F:terpene synthase activity"/>
    <property type="evidence" value="ECO:0007669"/>
    <property type="project" value="InterPro"/>
</dbReference>
<dbReference type="Gene3D" id="1.10.600.10">
    <property type="entry name" value="Farnesyl Diphosphate Synthase"/>
    <property type="match status" value="1"/>
</dbReference>
<dbReference type="InterPro" id="IPR008949">
    <property type="entry name" value="Isoprenoid_synthase_dom_sf"/>
</dbReference>
<dbReference type="InterPro" id="IPR034686">
    <property type="entry name" value="Terpene_cyclase-like_2"/>
</dbReference>
<dbReference type="PANTHER" id="PTHR35201:SF4">
    <property type="entry name" value="BETA-PINACENE SYNTHASE-RELATED"/>
    <property type="match status" value="1"/>
</dbReference>
<dbReference type="PANTHER" id="PTHR35201">
    <property type="entry name" value="TERPENE SYNTHASE"/>
    <property type="match status" value="1"/>
</dbReference>
<dbReference type="Pfam" id="PF19086">
    <property type="entry name" value="Terpene_syn_C_2"/>
    <property type="match status" value="1"/>
</dbReference>
<dbReference type="SFLD" id="SFLDS00005">
    <property type="entry name" value="Isoprenoid_Synthase_Type_I"/>
    <property type="match status" value="1"/>
</dbReference>
<dbReference type="SFLD" id="SFLDG01020">
    <property type="entry name" value="Terpene_Cyclase_Like_2"/>
    <property type="match status" value="1"/>
</dbReference>
<dbReference type="SUPFAM" id="SSF48576">
    <property type="entry name" value="Terpenoid synthases"/>
    <property type="match status" value="1"/>
</dbReference>
<evidence type="ECO:0000250" key="1">
    <source>
        <dbReference type="UniProtKB" id="B5HDJ6"/>
    </source>
</evidence>
<evidence type="ECO:0000269" key="2">
    <source>
    </source>
</evidence>
<evidence type="ECO:0000303" key="3">
    <source>
    </source>
</evidence>
<evidence type="ECO:0000305" key="4"/>
<evidence type="ECO:0000305" key="5">
    <source>
    </source>
</evidence>
<evidence type="ECO:0000312" key="6">
    <source>
        <dbReference type="EMBL" id="SDM62252.1"/>
    </source>
</evidence>
<name>BDS_ALLAB</name>
<sequence length="363" mass="40889">MNPRTVQPLDVPPLYCPIPPEIHPDLALIEKRSIDWFQGFGVFPGEAGRALLRGWQFPALAARAYPEEDAERVRIVADFVHWTTFDDVLIDTDHSHVDDVLPGAPPDLLAVATKMVRMLEVPDAALLPGDPWIRSLMDLRRRLGTIAAPEQMARWTGAFREYLLAATWKRFCRQARRLPSLADYVTMRTADGGVQMYVALSEVVGGYRLTDRDLATPAVRAVTEMALTLIAWDNDLFSHYKESLTAGPCINLIDVIAGERGCSLEDAVPVAVAMRDRVMCRYMAVRERTERDLGVAARRYVRSLDRWIAANIDMSATSTRYTNPLNRPATEMPRARFTPARTDLPSDDSPLALPFPDIAWWWD</sequence>